<name>NIA_CICIN</name>
<comment type="function">
    <text>Nitrate reductase is a key enzyme involved in the first step of nitrate assimilation in plants, fungi and bacteria.</text>
</comment>
<comment type="catalytic activity">
    <reaction>
        <text>nitrite + NAD(+) + H2O = nitrate + NADH + H(+)</text>
        <dbReference type="Rhea" id="RHEA:17913"/>
        <dbReference type="ChEBI" id="CHEBI:15377"/>
        <dbReference type="ChEBI" id="CHEBI:15378"/>
        <dbReference type="ChEBI" id="CHEBI:16301"/>
        <dbReference type="ChEBI" id="CHEBI:17632"/>
        <dbReference type="ChEBI" id="CHEBI:57540"/>
        <dbReference type="ChEBI" id="CHEBI:57945"/>
        <dbReference type="EC" id="1.7.1.1"/>
    </reaction>
</comment>
<comment type="cofactor">
    <cofactor evidence="1">
        <name>FAD</name>
        <dbReference type="ChEBI" id="CHEBI:57692"/>
    </cofactor>
    <text evidence="1">Binds 1 FAD per subunit.</text>
</comment>
<comment type="cofactor">
    <cofactor evidence="1">
        <name>heme</name>
        <dbReference type="ChEBI" id="CHEBI:30413"/>
    </cofactor>
    <text evidence="1">Binds 1 heme group per subunit.</text>
</comment>
<comment type="cofactor">
    <cofactor evidence="1">
        <name>Mo-molybdopterin</name>
        <dbReference type="ChEBI" id="CHEBI:71302"/>
    </cofactor>
    <text evidence="1">Binds 1 Mo-molybdopterin (Mo-MPT) cofactor per subunit.</text>
</comment>
<comment type="subunit">
    <text evidence="1">Homodimer.</text>
</comment>
<comment type="tissue specificity">
    <text>In cortical cells of roots grown at low nitrate concentrations, in vascular tissues of roots at high nitrate concentrations and in root apex under both conditions.</text>
</comment>
<comment type="similarity">
    <text evidence="9">Belongs to the nitrate reductase family.</text>
</comment>
<keyword id="KW-1015">Disulfide bond</keyword>
<keyword id="KW-0274">FAD</keyword>
<keyword id="KW-0285">Flavoprotein</keyword>
<keyword id="KW-0349">Heme</keyword>
<keyword id="KW-0408">Iron</keyword>
<keyword id="KW-0479">Metal-binding</keyword>
<keyword id="KW-0500">Molybdenum</keyword>
<keyword id="KW-0520">NAD</keyword>
<keyword id="KW-0534">Nitrate assimilation</keyword>
<keyword id="KW-0560">Oxidoreductase</keyword>
<organism>
    <name type="scientific">Cichorium intybus</name>
    <name type="common">Chicory</name>
    <dbReference type="NCBI Taxonomy" id="13427"/>
    <lineage>
        <taxon>Eukaryota</taxon>
        <taxon>Viridiplantae</taxon>
        <taxon>Streptophyta</taxon>
        <taxon>Embryophyta</taxon>
        <taxon>Tracheophyta</taxon>
        <taxon>Spermatophyta</taxon>
        <taxon>Magnoliopsida</taxon>
        <taxon>eudicotyledons</taxon>
        <taxon>Gunneridae</taxon>
        <taxon>Pentapetalae</taxon>
        <taxon>asterids</taxon>
        <taxon>campanulids</taxon>
        <taxon>Asterales</taxon>
        <taxon>Asteraceae</taxon>
        <taxon>Cichorioideae</taxon>
        <taxon>Cichorieae</taxon>
        <taxon>Cichoriinae</taxon>
        <taxon>Cichorium</taxon>
    </lineage>
</organism>
<accession>P43101</accession>
<feature type="chain" id="PRO_0000166054" description="Nitrate reductase [NADH]">
    <location>
        <begin position="1"/>
        <end position="920"/>
    </location>
</feature>
<feature type="domain" description="Cytochrome b5 heme-binding" evidence="6">
    <location>
        <begin position="534"/>
        <end position="609"/>
    </location>
</feature>
<feature type="domain" description="FAD-binding FR-type" evidence="7">
    <location>
        <begin position="663"/>
        <end position="775"/>
    </location>
</feature>
<feature type="region of interest" description="Disordered" evidence="8">
    <location>
        <begin position="1"/>
        <end position="69"/>
    </location>
</feature>
<feature type="compositionally biased region" description="Acidic residues" evidence="8">
    <location>
        <begin position="60"/>
        <end position="69"/>
    </location>
</feature>
<feature type="binding site" evidence="4">
    <location>
        <position position="185"/>
    </location>
    <ligand>
        <name>Mo-molybdopterin</name>
        <dbReference type="ChEBI" id="CHEBI:71302"/>
    </ligand>
    <ligandPart>
        <name>Mo</name>
        <dbReference type="ChEBI" id="CHEBI:28685"/>
    </ligandPart>
</feature>
<feature type="binding site" description="axial binding residue" evidence="6">
    <location>
        <position position="569"/>
    </location>
    <ligand>
        <name>heme</name>
        <dbReference type="ChEBI" id="CHEBI:30413"/>
    </ligand>
    <ligandPart>
        <name>Fe</name>
        <dbReference type="ChEBI" id="CHEBI:18248"/>
    </ligandPart>
</feature>
<feature type="binding site" description="axial binding residue" evidence="6">
    <location>
        <position position="592"/>
    </location>
    <ligand>
        <name>heme</name>
        <dbReference type="ChEBI" id="CHEBI:30413"/>
    </ligand>
    <ligandPart>
        <name>Fe</name>
        <dbReference type="ChEBI" id="CHEBI:18248"/>
    </ligandPart>
</feature>
<feature type="binding site" evidence="2">
    <location>
        <begin position="715"/>
        <end position="718"/>
    </location>
    <ligand>
        <name>FAD</name>
        <dbReference type="ChEBI" id="CHEBI:57692"/>
    </ligand>
</feature>
<feature type="binding site" evidence="2">
    <location>
        <begin position="732"/>
        <end position="736"/>
    </location>
    <ligand>
        <name>FAD</name>
        <dbReference type="ChEBI" id="CHEBI:57692"/>
    </ligand>
</feature>
<feature type="binding site" evidence="3">
    <location>
        <position position="737"/>
    </location>
    <ligand>
        <name>FAD</name>
        <dbReference type="ChEBI" id="CHEBI:57692"/>
    </ligand>
</feature>
<feature type="binding site" evidence="2">
    <location>
        <position position="744"/>
    </location>
    <ligand>
        <name>FAD</name>
        <dbReference type="ChEBI" id="CHEBI:57692"/>
    </ligand>
</feature>
<feature type="binding site" evidence="2">
    <location>
        <begin position="749"/>
        <end position="751"/>
    </location>
    <ligand>
        <name>FAD</name>
        <dbReference type="ChEBI" id="CHEBI:57692"/>
    </ligand>
</feature>
<feature type="binding site" evidence="2">
    <location>
        <position position="802"/>
    </location>
    <ligand>
        <name>FAD</name>
        <dbReference type="ChEBI" id="CHEBI:57692"/>
    </ligand>
</feature>
<feature type="disulfide bond" description="Interchain" evidence="5">
    <location>
        <position position="424"/>
    </location>
</feature>
<evidence type="ECO:0000250" key="1"/>
<evidence type="ECO:0000250" key="2">
    <source>
        <dbReference type="UniProtKB" id="A0A286R227"/>
    </source>
</evidence>
<evidence type="ECO:0000250" key="3">
    <source>
        <dbReference type="UniProtKB" id="P17571"/>
    </source>
</evidence>
<evidence type="ECO:0000250" key="4">
    <source>
        <dbReference type="UniProtKB" id="P49050"/>
    </source>
</evidence>
<evidence type="ECO:0000255" key="5"/>
<evidence type="ECO:0000255" key="6">
    <source>
        <dbReference type="PROSITE-ProRule" id="PRU00279"/>
    </source>
</evidence>
<evidence type="ECO:0000255" key="7">
    <source>
        <dbReference type="PROSITE-ProRule" id="PRU00716"/>
    </source>
</evidence>
<evidence type="ECO:0000256" key="8">
    <source>
        <dbReference type="SAM" id="MobiDB-lite"/>
    </source>
</evidence>
<evidence type="ECO:0000305" key="9"/>
<gene>
    <name type="primary">NIA</name>
</gene>
<dbReference type="EC" id="1.7.1.1"/>
<dbReference type="EMBL" id="X84103">
    <property type="protein sequence ID" value="CAA58909.1"/>
    <property type="molecule type" value="Genomic_DNA"/>
</dbReference>
<dbReference type="EMBL" id="X84102">
    <property type="protein sequence ID" value="CAA58908.1"/>
    <property type="molecule type" value="mRNA"/>
</dbReference>
<dbReference type="PIR" id="S52301">
    <property type="entry name" value="S52301"/>
</dbReference>
<dbReference type="SMR" id="P43101"/>
<dbReference type="GO" id="GO:0071949">
    <property type="term" value="F:FAD binding"/>
    <property type="evidence" value="ECO:0000250"/>
    <property type="project" value="UniProtKB"/>
</dbReference>
<dbReference type="GO" id="GO:0020037">
    <property type="term" value="F:heme binding"/>
    <property type="evidence" value="ECO:0007669"/>
    <property type="project" value="InterPro"/>
</dbReference>
<dbReference type="GO" id="GO:0030151">
    <property type="term" value="F:molybdenum ion binding"/>
    <property type="evidence" value="ECO:0000250"/>
    <property type="project" value="UniProtKB"/>
</dbReference>
<dbReference type="GO" id="GO:0043546">
    <property type="term" value="F:molybdopterin cofactor binding"/>
    <property type="evidence" value="ECO:0007669"/>
    <property type="project" value="InterPro"/>
</dbReference>
<dbReference type="GO" id="GO:0009703">
    <property type="term" value="F:nitrate reductase (NADH) activity"/>
    <property type="evidence" value="ECO:0007669"/>
    <property type="project" value="UniProtKB-EC"/>
</dbReference>
<dbReference type="GO" id="GO:0050464">
    <property type="term" value="F:nitrate reductase (NADPH) activity"/>
    <property type="evidence" value="ECO:0007669"/>
    <property type="project" value="InterPro"/>
</dbReference>
<dbReference type="GO" id="GO:0008482">
    <property type="term" value="F:sulfite oxidase activity"/>
    <property type="evidence" value="ECO:0007669"/>
    <property type="project" value="TreeGrafter"/>
</dbReference>
<dbReference type="GO" id="GO:0042128">
    <property type="term" value="P:nitrate assimilation"/>
    <property type="evidence" value="ECO:0007669"/>
    <property type="project" value="UniProtKB-KW"/>
</dbReference>
<dbReference type="GO" id="GO:0006809">
    <property type="term" value="P:nitric oxide biosynthetic process"/>
    <property type="evidence" value="ECO:0007669"/>
    <property type="project" value="InterPro"/>
</dbReference>
<dbReference type="GO" id="GO:0006790">
    <property type="term" value="P:sulfur compound metabolic process"/>
    <property type="evidence" value="ECO:0007669"/>
    <property type="project" value="TreeGrafter"/>
</dbReference>
<dbReference type="CDD" id="cd06183">
    <property type="entry name" value="cyt_b5_reduct_like"/>
    <property type="match status" value="1"/>
</dbReference>
<dbReference type="CDD" id="cd02112">
    <property type="entry name" value="eukary_NR_Moco"/>
    <property type="match status" value="1"/>
</dbReference>
<dbReference type="FunFam" id="2.40.30.10:FF:000021">
    <property type="entry name" value="NADH-cytochrome b5 reductase"/>
    <property type="match status" value="1"/>
</dbReference>
<dbReference type="FunFam" id="2.60.40.650:FF:000001">
    <property type="entry name" value="Nitrate reductase"/>
    <property type="match status" value="1"/>
</dbReference>
<dbReference type="FunFam" id="3.90.420.10:FF:000003">
    <property type="entry name" value="Nitrate reductase"/>
    <property type="match status" value="1"/>
</dbReference>
<dbReference type="FunFam" id="3.40.50.80:FF:000025">
    <property type="entry name" value="Nitrate reductase [NADH]"/>
    <property type="match status" value="1"/>
</dbReference>
<dbReference type="FunFam" id="3.10.120.10:FF:000007">
    <property type="entry name" value="Sulfite oxidase, mitochondrial"/>
    <property type="match status" value="1"/>
</dbReference>
<dbReference type="Gene3D" id="2.60.40.650">
    <property type="match status" value="1"/>
</dbReference>
<dbReference type="Gene3D" id="3.10.120.10">
    <property type="entry name" value="Cytochrome b5-like heme/steroid binding domain"/>
    <property type="match status" value="1"/>
</dbReference>
<dbReference type="Gene3D" id="3.40.50.80">
    <property type="entry name" value="Nucleotide-binding domain of ferredoxin-NADP reductase (FNR) module"/>
    <property type="match status" value="1"/>
</dbReference>
<dbReference type="Gene3D" id="3.90.420.10">
    <property type="entry name" value="Oxidoreductase, molybdopterin-binding domain"/>
    <property type="match status" value="1"/>
</dbReference>
<dbReference type="Gene3D" id="2.40.30.10">
    <property type="entry name" value="Translation factors"/>
    <property type="match status" value="1"/>
</dbReference>
<dbReference type="InterPro" id="IPR008333">
    <property type="entry name" value="Cbr1-like_FAD-bd_dom"/>
</dbReference>
<dbReference type="InterPro" id="IPR001199">
    <property type="entry name" value="Cyt_B5-like_heme/steroid-bd"/>
</dbReference>
<dbReference type="InterPro" id="IPR036400">
    <property type="entry name" value="Cyt_B5-like_heme/steroid_sf"/>
</dbReference>
<dbReference type="InterPro" id="IPR018506">
    <property type="entry name" value="Cyt_B5_heme-BS"/>
</dbReference>
<dbReference type="InterPro" id="IPR017927">
    <property type="entry name" value="FAD-bd_FR_type"/>
</dbReference>
<dbReference type="InterPro" id="IPR001709">
    <property type="entry name" value="Flavoprot_Pyr_Nucl_cyt_Rdtase"/>
</dbReference>
<dbReference type="InterPro" id="IPR039261">
    <property type="entry name" value="FNR_nucleotide-bd"/>
</dbReference>
<dbReference type="InterPro" id="IPR014756">
    <property type="entry name" value="Ig_E-set"/>
</dbReference>
<dbReference type="InterPro" id="IPR005066">
    <property type="entry name" value="MoCF_OxRdtse_dimer"/>
</dbReference>
<dbReference type="InterPro" id="IPR008335">
    <property type="entry name" value="Mopterin_OxRdtase_euk"/>
</dbReference>
<dbReference type="InterPro" id="IPR012137">
    <property type="entry name" value="Nitr_rd_NADH"/>
</dbReference>
<dbReference type="InterPro" id="IPR001433">
    <property type="entry name" value="OxRdtase_FAD/NAD-bd"/>
</dbReference>
<dbReference type="InterPro" id="IPR000572">
    <property type="entry name" value="OxRdtase_Mopterin-bd_dom"/>
</dbReference>
<dbReference type="InterPro" id="IPR036374">
    <property type="entry name" value="OxRdtase_Mopterin-bd_sf"/>
</dbReference>
<dbReference type="InterPro" id="IPR022407">
    <property type="entry name" value="OxRdtase_Mopterin_BS"/>
</dbReference>
<dbReference type="InterPro" id="IPR017938">
    <property type="entry name" value="Riboflavin_synthase-like_b-brl"/>
</dbReference>
<dbReference type="PANTHER" id="PTHR19372:SF7">
    <property type="entry name" value="SULFITE OXIDASE, MITOCHONDRIAL"/>
    <property type="match status" value="1"/>
</dbReference>
<dbReference type="PANTHER" id="PTHR19372">
    <property type="entry name" value="SULFITE REDUCTASE"/>
    <property type="match status" value="1"/>
</dbReference>
<dbReference type="Pfam" id="PF00173">
    <property type="entry name" value="Cyt-b5"/>
    <property type="match status" value="1"/>
</dbReference>
<dbReference type="Pfam" id="PF00970">
    <property type="entry name" value="FAD_binding_6"/>
    <property type="match status" value="1"/>
</dbReference>
<dbReference type="Pfam" id="PF03404">
    <property type="entry name" value="Mo-co_dimer"/>
    <property type="match status" value="1"/>
</dbReference>
<dbReference type="Pfam" id="PF00175">
    <property type="entry name" value="NAD_binding_1"/>
    <property type="match status" value="1"/>
</dbReference>
<dbReference type="Pfam" id="PF00174">
    <property type="entry name" value="Oxidored_molyb"/>
    <property type="match status" value="1"/>
</dbReference>
<dbReference type="PIRSF" id="PIRSF000233">
    <property type="entry name" value="Nitr_rd_NADH"/>
    <property type="match status" value="1"/>
</dbReference>
<dbReference type="PRINTS" id="PR00406">
    <property type="entry name" value="CYTB5RDTASE"/>
</dbReference>
<dbReference type="PRINTS" id="PR00363">
    <property type="entry name" value="CYTOCHROMEB5"/>
</dbReference>
<dbReference type="PRINTS" id="PR00407">
    <property type="entry name" value="EUMOPTERIN"/>
</dbReference>
<dbReference type="PRINTS" id="PR00371">
    <property type="entry name" value="FPNCR"/>
</dbReference>
<dbReference type="SMART" id="SM01117">
    <property type="entry name" value="Cyt-b5"/>
    <property type="match status" value="1"/>
</dbReference>
<dbReference type="SUPFAM" id="SSF55856">
    <property type="entry name" value="Cytochrome b5-like heme/steroid binding domain"/>
    <property type="match status" value="1"/>
</dbReference>
<dbReference type="SUPFAM" id="SSF81296">
    <property type="entry name" value="E set domains"/>
    <property type="match status" value="1"/>
</dbReference>
<dbReference type="SUPFAM" id="SSF52343">
    <property type="entry name" value="Ferredoxin reductase-like, C-terminal NADP-linked domain"/>
    <property type="match status" value="1"/>
</dbReference>
<dbReference type="SUPFAM" id="SSF56524">
    <property type="entry name" value="Oxidoreductase molybdopterin-binding domain"/>
    <property type="match status" value="1"/>
</dbReference>
<dbReference type="SUPFAM" id="SSF63380">
    <property type="entry name" value="Riboflavin synthase domain-like"/>
    <property type="match status" value="1"/>
</dbReference>
<dbReference type="PROSITE" id="PS00191">
    <property type="entry name" value="CYTOCHROME_B5_1"/>
    <property type="match status" value="1"/>
</dbReference>
<dbReference type="PROSITE" id="PS50255">
    <property type="entry name" value="CYTOCHROME_B5_2"/>
    <property type="match status" value="1"/>
</dbReference>
<dbReference type="PROSITE" id="PS51384">
    <property type="entry name" value="FAD_FR"/>
    <property type="match status" value="1"/>
</dbReference>
<dbReference type="PROSITE" id="PS00559">
    <property type="entry name" value="MOLYBDOPTERIN_EUK"/>
    <property type="match status" value="1"/>
</dbReference>
<proteinExistence type="evidence at transcript level"/>
<protein>
    <recommendedName>
        <fullName>Nitrate reductase [NADH]</fullName>
        <shortName>NR</shortName>
        <ecNumber>1.7.1.1</ecNumber>
    </recommendedName>
</protein>
<sequence>MAASVENRQFRHEPGLSAAGVVRSFSPNHRRSDSPIRNCNYPAAAREFMTPKKLPPETYDTSDDEEDEADYRDAIKKSNSELESSVFDPRDQGTADQWIERNPSMVRLTGKHPFNSEPPLNKLMQHGFITPDPLHYVRNHGPVPNATWEDWTVEICGLVKRPARFSMTQLVNEFPSREFPVTLVCAGNRRKEQNLTKQTIGFNWGAAGISTSVWKGVPLVHILKRCGIYSRKKGALNVCFEGAEDLPGGGGSKYGTSIKIEMAMDPARDIILAYMQNGEKLSPDHGFPVRMIIPGFIGGRMVKWLKRIIVTTPESESYYHFKDNRVLPSHVDAELANSEGWWYKPEYIINELNINSVITTPCHEEILPINSWTTQRPYTLRGYAYSGGGKKVTRVEVTMDGGETWNVCTLDHKEKPTRYAKYWCWCFWSLEVEVLDLLSAKEIAVRAWDETLNTQPDKLIWNLMGMMNNCWFRVKTNMCKPHKGEIGIVFEHPTQPGNQSGGWMAREKHLEISSELAHPTLKKSVSSPFMNTTSLTFTMSEVKKHNSADSAWIVVHGHIYDCTSFLKDHPGGSDSILLNAGTDCTEEFDAIHSDKAKKLLEEYRVGELITMGYSSDSAASSPNNSVHGATNYLTLHLSLATIKEIAPTRSVALIPKEIAPTRREKIPCKLISKTSVSHDVRLFRFALPSPDQVLGLPVGKHVFVCATIDDKLCMRAYTPTSTIDEVGYFELLVKIYFKGVEPKFPNGGLMSQHLESMELGSSIEIKGPLGHIEYMGRGTFSVHGKQKFARKLAMFAGGTGITPDLSSDASYLKDPEDDTEMYVVYANRTEDDILLREELDAWADKYSDRVKVWYVVAKSIREGWKYSEGFITEDIMREHVPEVSEDTLALACGPPPMIQFAINPNLEKMGYDIKNSLLVF</sequence>
<reference key="1">
    <citation type="journal article" date="1996" name="Planta">
        <title>Evidence for the nitrate-dependent spatial regulation of the nitrate reductase gene in chicory roots.</title>
        <authorList>
            <person name="Palms B."/>
            <person name="Goupil P."/>
            <person name="de Almeida Engler J."/>
            <person name="Van der Straeten D."/>
            <person name="Van Montagu M."/>
            <person name="Rambour S."/>
        </authorList>
    </citation>
    <scope>NUCLEOTIDE SEQUENCE [GENOMIC DNA / MRNA]</scope>
    <source>
        <strain>cv. Witloof</strain>
        <tissue>Leaf</tissue>
        <tissue>Root</tissue>
    </source>
</reference>